<proteinExistence type="inferred from homology"/>
<accession>Q6BRZ5</accession>
<comment type="function">
    <text evidence="1">Core component of nucleosome. Nucleosomes wrap and compact DNA into chromatin, limiting DNA accessibility to the cellular machineries which require DNA as a template. Histones thereby play a central role in transcription regulation, DNA repair, DNA replication and chromosomal stability. DNA accessibility is regulated via a complex set of post-translational modifications of histones, also called histone code, and nucleosome remodeling (By similarity).</text>
</comment>
<comment type="subunit">
    <text evidence="1">The nucleosome is a histone octamer containing two molecules each of H2A, H2B, H3 and H4 assembled in one H3-H4 heterotetramer and two H2A-H2B heterodimers. The octamer wraps approximately 147 bp of DNA (By similarity).</text>
</comment>
<comment type="subcellular location">
    <subcellularLocation>
        <location evidence="1">Nucleus</location>
    </subcellularLocation>
    <subcellularLocation>
        <location evidence="1">Chromosome</location>
    </subcellularLocation>
</comment>
<comment type="PTM">
    <text evidence="1">Phosphorylated by IPL1 to form H3S10ph. H3S10ph promotes subsequent H3K14ac formation by GCN5 and is required for transcriptional activation through TBP recruitment to the promoters (By similarity).</text>
</comment>
<comment type="PTM">
    <text evidence="1">Mono-, di- and trimethylated by the COMPASS complex to form H3K4me1/2/3. H3K4me activates gene expression by regulating transcription elongation and plays a role in telomere length maintenance. H3K4me enrichment correlates with transcription levels, and occurs in a 5' to 3' gradient with H3K4me3 enrichment at the 5'-end of genes, shifting to H3K4me2 and then H3K4me1. Methylated by SET2 to form H3K36me. H3K36me represses gene expression. Methylated by DOT1 to form H3K79me. H3K79me is required for association of SIR proteins with telomeric regions and for telomeric silencing. The COMPASS-mediated formation of H3K4me2/3 and the DOT1-mediated formation of H3K79me require H2BK123ub1 (By similarity).</text>
</comment>
<comment type="PTM">
    <text evidence="1">Acetylation of histone H3 leads to transcriptional activation. H3K14ac formation by GCN5 is promoted by H3S10ph. H3K14ac can also be formed by ESA1. H3K56ac formation occurs predominantly in newly synthesized H3 molecules during G1, S and G2/M of the cell cycle and may be involved in DNA repair (By similarity).</text>
</comment>
<comment type="similarity">
    <text evidence="3">Belongs to the histone H3 family.</text>
</comment>
<comment type="caution">
    <text evidence="3">To ensure consistency between histone entries, we follow the 'Brno' nomenclature for histone modifications, with positions referring to those used in the literature for the 'closest' model organism. Due to slight variations in histone sequences between organisms and to the presence of initiator methionine in UniProtKB/Swiss-Prot sequences, the actual positions of modified amino acids in the sequence generally differ. In this entry the following conventions are used: H3K4me1/2/3 = mono-, di- and trimethylated Lys-5; H3K9ac = acetylated Lys-10; H3K9me1 = monomethylated Lys-10; H3S10ph = phosphorylated Ser-11; H3K14ac = acetylated Lys-15; H3K14me2 = dimethylated Lys-15; H3K18ac = acetylated Lys-19; H3K18me1 = monomethylated Lys-19; H3K23ac = acetylated Lys-24; H3K23me1 = monomethylated Lys-24; H3K27ac = acetylated Lys-28; H3K27me1/2/3 = mono-, di- and trimethylated Lys-28; H3K36ac = acetylated Lys-37; H3K36me1/2/3 = mono-, di- and trimethylated Lys-37; H3K56ac = acetylated Lys-57; H3K64ac = acetylated Lys-65; H3K79me1/2/3 = mono-, di- and trimethylated Lys-80.</text>
</comment>
<sequence length="136" mass="15388">MARTKQTARKSTGGKAPRKQLASKAARKSAPSTGGVKKPHRYKPGTVALREIRRFQKSTELLIRKLPFQRLVREIAQDFKTDLRFQSSAIGALQESVEAYLVSLFEDTNLCAIHAKRVTIQKKDIQLARRLRGERS</sequence>
<evidence type="ECO:0000250" key="1"/>
<evidence type="ECO:0000256" key="2">
    <source>
        <dbReference type="SAM" id="MobiDB-lite"/>
    </source>
</evidence>
<evidence type="ECO:0000305" key="3"/>
<organism>
    <name type="scientific">Debaryomyces hansenii (strain ATCC 36239 / CBS 767 / BCRC 21394 / JCM 1990 / NBRC 0083 / IGC 2968)</name>
    <name type="common">Yeast</name>
    <name type="synonym">Torulaspora hansenii</name>
    <dbReference type="NCBI Taxonomy" id="284592"/>
    <lineage>
        <taxon>Eukaryota</taxon>
        <taxon>Fungi</taxon>
        <taxon>Dikarya</taxon>
        <taxon>Ascomycota</taxon>
        <taxon>Saccharomycotina</taxon>
        <taxon>Pichiomycetes</taxon>
        <taxon>Debaryomycetaceae</taxon>
        <taxon>Debaryomyces</taxon>
    </lineage>
</organism>
<gene>
    <name type="primary">HHT1</name>
    <name type="ordered locus">DEHA2A10538g</name>
</gene>
<gene>
    <name type="primary">HHT2</name>
    <name type="ordered locus">DEHA2D12694g</name>
</gene>
<reference key="1">
    <citation type="journal article" date="2004" name="Nature">
        <title>Genome evolution in yeasts.</title>
        <authorList>
            <person name="Dujon B."/>
            <person name="Sherman D."/>
            <person name="Fischer G."/>
            <person name="Durrens P."/>
            <person name="Casaregola S."/>
            <person name="Lafontaine I."/>
            <person name="de Montigny J."/>
            <person name="Marck C."/>
            <person name="Neuveglise C."/>
            <person name="Talla E."/>
            <person name="Goffard N."/>
            <person name="Frangeul L."/>
            <person name="Aigle M."/>
            <person name="Anthouard V."/>
            <person name="Babour A."/>
            <person name="Barbe V."/>
            <person name="Barnay S."/>
            <person name="Blanchin S."/>
            <person name="Beckerich J.-M."/>
            <person name="Beyne E."/>
            <person name="Bleykasten C."/>
            <person name="Boisrame A."/>
            <person name="Boyer J."/>
            <person name="Cattolico L."/>
            <person name="Confanioleri F."/>
            <person name="de Daruvar A."/>
            <person name="Despons L."/>
            <person name="Fabre E."/>
            <person name="Fairhead C."/>
            <person name="Ferry-Dumazet H."/>
            <person name="Groppi A."/>
            <person name="Hantraye F."/>
            <person name="Hennequin C."/>
            <person name="Jauniaux N."/>
            <person name="Joyet P."/>
            <person name="Kachouri R."/>
            <person name="Kerrest A."/>
            <person name="Koszul R."/>
            <person name="Lemaire M."/>
            <person name="Lesur I."/>
            <person name="Ma L."/>
            <person name="Muller H."/>
            <person name="Nicaud J.-M."/>
            <person name="Nikolski M."/>
            <person name="Oztas S."/>
            <person name="Ozier-Kalogeropoulos O."/>
            <person name="Pellenz S."/>
            <person name="Potier S."/>
            <person name="Richard G.-F."/>
            <person name="Straub M.-L."/>
            <person name="Suleau A."/>
            <person name="Swennen D."/>
            <person name="Tekaia F."/>
            <person name="Wesolowski-Louvel M."/>
            <person name="Westhof E."/>
            <person name="Wirth B."/>
            <person name="Zeniou-Meyer M."/>
            <person name="Zivanovic Y."/>
            <person name="Bolotin-Fukuhara M."/>
            <person name="Thierry A."/>
            <person name="Bouchier C."/>
            <person name="Caudron B."/>
            <person name="Scarpelli C."/>
            <person name="Gaillardin C."/>
            <person name="Weissenbach J."/>
            <person name="Wincker P."/>
            <person name="Souciet J.-L."/>
        </authorList>
    </citation>
    <scope>NUCLEOTIDE SEQUENCE [LARGE SCALE GENOMIC DNA]</scope>
    <source>
        <strain>ATCC 36239 / CBS 767 / BCRC 21394 / JCM 1990 / NBRC 0083 / IGC 2968</strain>
    </source>
</reference>
<protein>
    <recommendedName>
        <fullName>Histone H3.1/H3.2</fullName>
    </recommendedName>
</protein>
<feature type="initiator methionine" description="Removed" evidence="1">
    <location>
        <position position="1"/>
    </location>
</feature>
<feature type="chain" id="PRO_0000270590" description="Histone H3.1/H3.2">
    <location>
        <begin position="2"/>
        <end position="136"/>
    </location>
</feature>
<feature type="region of interest" description="Disordered" evidence="2">
    <location>
        <begin position="1"/>
        <end position="43"/>
    </location>
</feature>
<feature type="modified residue" description="N6,N6,N6-trimethyllysine; alternate" evidence="1">
    <location>
        <position position="5"/>
    </location>
</feature>
<feature type="modified residue" description="N6,N6-dimethyllysine; alternate" evidence="1">
    <location>
        <position position="5"/>
    </location>
</feature>
<feature type="modified residue" description="N6-methyllysine; alternate" evidence="1">
    <location>
        <position position="5"/>
    </location>
</feature>
<feature type="modified residue" description="N6-acetyllysine; alternate" evidence="1">
    <location>
        <position position="10"/>
    </location>
</feature>
<feature type="modified residue" description="N6-methyllysine; alternate" evidence="1">
    <location>
        <position position="10"/>
    </location>
</feature>
<feature type="modified residue" description="Phosphoserine" evidence="1">
    <location>
        <position position="11"/>
    </location>
</feature>
<feature type="modified residue" description="N6,N6-dimethyllysine; alternate" evidence="1">
    <location>
        <position position="15"/>
    </location>
</feature>
<feature type="modified residue" description="N6-acetyllysine; alternate" evidence="1">
    <location>
        <position position="15"/>
    </location>
</feature>
<feature type="modified residue" description="N6-acetyllysine; alternate" evidence="1">
    <location>
        <position position="19"/>
    </location>
</feature>
<feature type="modified residue" description="N6-methyllysine; alternate" evidence="1">
    <location>
        <position position="19"/>
    </location>
</feature>
<feature type="modified residue" description="N6-acetyllysine; alternate" evidence="1">
    <location>
        <position position="24"/>
    </location>
</feature>
<feature type="modified residue" description="N6-methyllysine; alternate" evidence="1">
    <location>
        <position position="24"/>
    </location>
</feature>
<feature type="modified residue" description="N6,N6,N6-trimethyllysine; alternate" evidence="1">
    <location>
        <position position="28"/>
    </location>
</feature>
<feature type="modified residue" description="N6,N6-dimethyllysine; alternate" evidence="1">
    <location>
        <position position="28"/>
    </location>
</feature>
<feature type="modified residue" description="N6-acetyllysine; alternate" evidence="1">
    <location>
        <position position="28"/>
    </location>
</feature>
<feature type="modified residue" description="N6-methyllysine; alternate" evidence="1">
    <location>
        <position position="28"/>
    </location>
</feature>
<feature type="modified residue" description="N6,N6,N6-trimethyllysine; alternate" evidence="1">
    <location>
        <position position="37"/>
    </location>
</feature>
<feature type="modified residue" description="N6,N6-dimethyllysine; alternate" evidence="1">
    <location>
        <position position="37"/>
    </location>
</feature>
<feature type="modified residue" description="N6-acetyllysine; alternate" evidence="1">
    <location>
        <position position="37"/>
    </location>
</feature>
<feature type="modified residue" description="N6-methyllysine; alternate" evidence="1">
    <location>
        <position position="37"/>
    </location>
</feature>
<feature type="modified residue" description="N6-acetyllysine" evidence="1">
    <location>
        <position position="57"/>
    </location>
</feature>
<feature type="modified residue" description="N6-acetyllysine" evidence="1">
    <location>
        <position position="65"/>
    </location>
</feature>
<feature type="modified residue" description="N6,N6,N6-trimethyllysine; alternate" evidence="1">
    <location>
        <position position="80"/>
    </location>
</feature>
<feature type="modified residue" description="N6,N6-dimethyllysine; alternate" evidence="1">
    <location>
        <position position="80"/>
    </location>
</feature>
<feature type="modified residue" description="N6-methyllysine; alternate" evidence="1">
    <location>
        <position position="80"/>
    </location>
</feature>
<dbReference type="EMBL" id="CR382136">
    <property type="protein sequence ID" value="CAG87193.1"/>
    <property type="molecule type" value="Genomic_DNA"/>
</dbReference>
<dbReference type="EMBL" id="CR382133">
    <property type="protein sequence ID" value="CAG84760.1"/>
    <property type="molecule type" value="Genomic_DNA"/>
</dbReference>
<dbReference type="RefSeq" id="XP_456791.1">
    <property type="nucleotide sequence ID" value="XM_456791.1"/>
</dbReference>
<dbReference type="RefSeq" id="XP_459025.1">
    <property type="nucleotide sequence ID" value="XM_459025.1"/>
</dbReference>
<dbReference type="SMR" id="Q6BRZ5"/>
<dbReference type="FunCoup" id="Q6BRZ5">
    <property type="interactions" value="986"/>
</dbReference>
<dbReference type="STRING" id="284592.Q6BRZ5"/>
<dbReference type="GeneID" id="2899520"/>
<dbReference type="GeneID" id="2901208"/>
<dbReference type="KEGG" id="dha:DEHA2A10538g"/>
<dbReference type="KEGG" id="dha:DEHA2D12694g"/>
<dbReference type="VEuPathDB" id="FungiDB:DEHA2A10538g"/>
<dbReference type="VEuPathDB" id="FungiDB:DEHA2D12694g"/>
<dbReference type="eggNOG" id="KOG1745">
    <property type="taxonomic scope" value="Eukaryota"/>
</dbReference>
<dbReference type="HOGENOM" id="CLU_078295_4_0_1"/>
<dbReference type="InParanoid" id="Q6BRZ5"/>
<dbReference type="OMA" id="HIFAEMA"/>
<dbReference type="OrthoDB" id="5326060at2759"/>
<dbReference type="Proteomes" id="UP000000599">
    <property type="component" value="Chromosome A"/>
</dbReference>
<dbReference type="Proteomes" id="UP000000599">
    <property type="component" value="Chromosome D"/>
</dbReference>
<dbReference type="GO" id="GO:0000786">
    <property type="term" value="C:nucleosome"/>
    <property type="evidence" value="ECO:0007669"/>
    <property type="project" value="UniProtKB-KW"/>
</dbReference>
<dbReference type="GO" id="GO:0005634">
    <property type="term" value="C:nucleus"/>
    <property type="evidence" value="ECO:0007669"/>
    <property type="project" value="UniProtKB-SubCell"/>
</dbReference>
<dbReference type="GO" id="GO:0003677">
    <property type="term" value="F:DNA binding"/>
    <property type="evidence" value="ECO:0007669"/>
    <property type="project" value="UniProtKB-KW"/>
</dbReference>
<dbReference type="GO" id="GO:0046982">
    <property type="term" value="F:protein heterodimerization activity"/>
    <property type="evidence" value="ECO:0007669"/>
    <property type="project" value="InterPro"/>
</dbReference>
<dbReference type="GO" id="GO:0030527">
    <property type="term" value="F:structural constituent of chromatin"/>
    <property type="evidence" value="ECO:0007669"/>
    <property type="project" value="InterPro"/>
</dbReference>
<dbReference type="CDD" id="cd22911">
    <property type="entry name" value="HFD_H3"/>
    <property type="match status" value="1"/>
</dbReference>
<dbReference type="FunFam" id="1.10.20.10:FF:000010">
    <property type="entry name" value="Histone H3"/>
    <property type="match status" value="1"/>
</dbReference>
<dbReference type="Gene3D" id="1.10.20.10">
    <property type="entry name" value="Histone, subunit A"/>
    <property type="match status" value="1"/>
</dbReference>
<dbReference type="InterPro" id="IPR009072">
    <property type="entry name" value="Histone-fold"/>
</dbReference>
<dbReference type="InterPro" id="IPR007125">
    <property type="entry name" value="Histone_H2A/H2B/H3"/>
</dbReference>
<dbReference type="InterPro" id="IPR000164">
    <property type="entry name" value="Histone_H3/CENP-A"/>
</dbReference>
<dbReference type="PANTHER" id="PTHR11426">
    <property type="entry name" value="HISTONE H3"/>
    <property type="match status" value="1"/>
</dbReference>
<dbReference type="Pfam" id="PF00125">
    <property type="entry name" value="Histone"/>
    <property type="match status" value="1"/>
</dbReference>
<dbReference type="PRINTS" id="PR00622">
    <property type="entry name" value="HISTONEH3"/>
</dbReference>
<dbReference type="SMART" id="SM00428">
    <property type="entry name" value="H3"/>
    <property type="match status" value="1"/>
</dbReference>
<dbReference type="SUPFAM" id="SSF47113">
    <property type="entry name" value="Histone-fold"/>
    <property type="match status" value="1"/>
</dbReference>
<dbReference type="PROSITE" id="PS00322">
    <property type="entry name" value="HISTONE_H3_1"/>
    <property type="match status" value="1"/>
</dbReference>
<dbReference type="PROSITE" id="PS00959">
    <property type="entry name" value="HISTONE_H3_2"/>
    <property type="match status" value="1"/>
</dbReference>
<keyword id="KW-0007">Acetylation</keyword>
<keyword id="KW-0158">Chromosome</keyword>
<keyword id="KW-0238">DNA-binding</keyword>
<keyword id="KW-0488">Methylation</keyword>
<keyword id="KW-0544">Nucleosome core</keyword>
<keyword id="KW-0539">Nucleus</keyword>
<keyword id="KW-0597">Phosphoprotein</keyword>
<keyword id="KW-1185">Reference proteome</keyword>
<name>H31_DEBHA</name>